<accession>A6Q2R2</accession>
<protein>
    <recommendedName>
        <fullName evidence="1">Argininosuccinate lyase</fullName>
        <shortName evidence="1">ASAL</shortName>
        <ecNumber evidence="1">4.3.2.1</ecNumber>
    </recommendedName>
    <alternativeName>
        <fullName evidence="1">Arginosuccinase</fullName>
    </alternativeName>
</protein>
<comment type="catalytic activity">
    <reaction evidence="1">
        <text>2-(N(omega)-L-arginino)succinate = fumarate + L-arginine</text>
        <dbReference type="Rhea" id="RHEA:24020"/>
        <dbReference type="ChEBI" id="CHEBI:29806"/>
        <dbReference type="ChEBI" id="CHEBI:32682"/>
        <dbReference type="ChEBI" id="CHEBI:57472"/>
        <dbReference type="EC" id="4.3.2.1"/>
    </reaction>
</comment>
<comment type="pathway">
    <text evidence="1">Amino-acid biosynthesis; L-arginine biosynthesis; L-arginine from L-ornithine and carbamoyl phosphate: step 3/3.</text>
</comment>
<comment type="subcellular location">
    <subcellularLocation>
        <location evidence="1">Cytoplasm</location>
    </subcellularLocation>
</comment>
<comment type="similarity">
    <text evidence="1">Belongs to the lyase 1 family. Argininosuccinate lyase subfamily.</text>
</comment>
<evidence type="ECO:0000255" key="1">
    <source>
        <dbReference type="HAMAP-Rule" id="MF_00006"/>
    </source>
</evidence>
<reference key="1">
    <citation type="journal article" date="2007" name="Proc. Natl. Acad. Sci. U.S.A.">
        <title>Deep-sea vent epsilon-proteobacterial genomes provide insights into emergence of pathogens.</title>
        <authorList>
            <person name="Nakagawa S."/>
            <person name="Takaki Y."/>
            <person name="Shimamura S."/>
            <person name="Reysenbach A.-L."/>
            <person name="Takai K."/>
            <person name="Horikoshi K."/>
        </authorList>
    </citation>
    <scope>NUCLEOTIDE SEQUENCE [LARGE SCALE GENOMIC DNA]</scope>
    <source>
        <strain>SB155-2</strain>
    </source>
</reference>
<feature type="chain" id="PRO_1000000516" description="Argininosuccinate lyase">
    <location>
        <begin position="1"/>
        <end position="462"/>
    </location>
</feature>
<sequence>MSKMWSGRFNANASTLLDQFNASLPFDKELYLQDIQGSIAHATMLAKQGILSQEEAESIIHGLKTVKEKIENGQFEWNIEDEDIHMAIEKALTNLIGDAGKKLHTARSRNDQVALDFRLYVQQSNKDLIRLLANLMQTLINIAKNHTQTLIPGMTHLQHAQPISFAYHLLAYASMFKRDIERFQSSFERNNYSPIGCAALAGTPHPIDREMTAQELGFDAPTINCLDTVSDRDFALEILFNIATMFMHISRLSEELILWSSYEFGFVTLSDEYSTGSSIMPQKKNPDVPELLRGKTGRAYGNLMALLTVMKGLPLAYNKDMQEDKEGVFDSVKNAKISLEILNETLKTMNINKEKMEAATKIGHLTATDLADYLVEKIGIPFREAHFITGKAVALAEQKQKDLSELSLAELQSIDPRIQNDVLQYLDLQHSMNARNSYGGTAKEQVEKQIEYFERFLEELEG</sequence>
<keyword id="KW-0028">Amino-acid biosynthesis</keyword>
<keyword id="KW-0055">Arginine biosynthesis</keyword>
<keyword id="KW-0963">Cytoplasm</keyword>
<keyword id="KW-0456">Lyase</keyword>
<keyword id="KW-1185">Reference proteome</keyword>
<gene>
    <name evidence="1" type="primary">argH</name>
    <name type="ordered locus">NIS_0657</name>
</gene>
<proteinExistence type="inferred from homology"/>
<organism>
    <name type="scientific">Nitratiruptor sp. (strain SB155-2)</name>
    <dbReference type="NCBI Taxonomy" id="387092"/>
    <lineage>
        <taxon>Bacteria</taxon>
        <taxon>Pseudomonadati</taxon>
        <taxon>Campylobacterota</taxon>
        <taxon>Epsilonproteobacteria</taxon>
        <taxon>Nautiliales</taxon>
        <taxon>Nitratiruptoraceae</taxon>
        <taxon>Nitratiruptor</taxon>
    </lineage>
</organism>
<dbReference type="EC" id="4.3.2.1" evidence="1"/>
<dbReference type="EMBL" id="AP009178">
    <property type="protein sequence ID" value="BAF69771.1"/>
    <property type="molecule type" value="Genomic_DNA"/>
</dbReference>
<dbReference type="RefSeq" id="WP_012082034.1">
    <property type="nucleotide sequence ID" value="NC_009662.1"/>
</dbReference>
<dbReference type="SMR" id="A6Q2R2"/>
<dbReference type="FunCoup" id="A6Q2R2">
    <property type="interactions" value="399"/>
</dbReference>
<dbReference type="STRING" id="387092.NIS_0657"/>
<dbReference type="KEGG" id="nis:NIS_0657"/>
<dbReference type="eggNOG" id="COG0165">
    <property type="taxonomic scope" value="Bacteria"/>
</dbReference>
<dbReference type="HOGENOM" id="CLU_027272_2_3_7"/>
<dbReference type="InParanoid" id="A6Q2R2"/>
<dbReference type="OrthoDB" id="9769623at2"/>
<dbReference type="UniPathway" id="UPA00068">
    <property type="reaction ID" value="UER00114"/>
</dbReference>
<dbReference type="Proteomes" id="UP000001118">
    <property type="component" value="Chromosome"/>
</dbReference>
<dbReference type="GO" id="GO:0005829">
    <property type="term" value="C:cytosol"/>
    <property type="evidence" value="ECO:0007669"/>
    <property type="project" value="TreeGrafter"/>
</dbReference>
<dbReference type="GO" id="GO:0004056">
    <property type="term" value="F:argininosuccinate lyase activity"/>
    <property type="evidence" value="ECO:0007669"/>
    <property type="project" value="UniProtKB-UniRule"/>
</dbReference>
<dbReference type="GO" id="GO:0042450">
    <property type="term" value="P:arginine biosynthetic process via ornithine"/>
    <property type="evidence" value="ECO:0007669"/>
    <property type="project" value="InterPro"/>
</dbReference>
<dbReference type="GO" id="GO:0006526">
    <property type="term" value="P:L-arginine biosynthetic process"/>
    <property type="evidence" value="ECO:0007669"/>
    <property type="project" value="UniProtKB-UniRule"/>
</dbReference>
<dbReference type="CDD" id="cd01359">
    <property type="entry name" value="Argininosuccinate_lyase"/>
    <property type="match status" value="1"/>
</dbReference>
<dbReference type="FunFam" id="1.10.275.10:FF:000002">
    <property type="entry name" value="Argininosuccinate lyase"/>
    <property type="match status" value="1"/>
</dbReference>
<dbReference type="FunFam" id="1.10.40.30:FF:000001">
    <property type="entry name" value="Argininosuccinate lyase"/>
    <property type="match status" value="1"/>
</dbReference>
<dbReference type="FunFam" id="1.20.200.10:FF:000002">
    <property type="entry name" value="Argininosuccinate lyase"/>
    <property type="match status" value="1"/>
</dbReference>
<dbReference type="Gene3D" id="1.10.40.30">
    <property type="entry name" value="Fumarase/aspartase (C-terminal domain)"/>
    <property type="match status" value="1"/>
</dbReference>
<dbReference type="Gene3D" id="1.20.200.10">
    <property type="entry name" value="Fumarase/aspartase (Central domain)"/>
    <property type="match status" value="1"/>
</dbReference>
<dbReference type="Gene3D" id="1.10.275.10">
    <property type="entry name" value="Fumarase/aspartase (N-terminal domain)"/>
    <property type="match status" value="1"/>
</dbReference>
<dbReference type="HAMAP" id="MF_00006">
    <property type="entry name" value="Arg_succ_lyase"/>
    <property type="match status" value="1"/>
</dbReference>
<dbReference type="InterPro" id="IPR029419">
    <property type="entry name" value="Arg_succ_lyase_C"/>
</dbReference>
<dbReference type="InterPro" id="IPR009049">
    <property type="entry name" value="Argininosuccinate_lyase"/>
</dbReference>
<dbReference type="InterPro" id="IPR024083">
    <property type="entry name" value="Fumarase/histidase_N"/>
</dbReference>
<dbReference type="InterPro" id="IPR020557">
    <property type="entry name" value="Fumarate_lyase_CS"/>
</dbReference>
<dbReference type="InterPro" id="IPR000362">
    <property type="entry name" value="Fumarate_lyase_fam"/>
</dbReference>
<dbReference type="InterPro" id="IPR022761">
    <property type="entry name" value="Fumarate_lyase_N"/>
</dbReference>
<dbReference type="InterPro" id="IPR008948">
    <property type="entry name" value="L-Aspartase-like"/>
</dbReference>
<dbReference type="NCBIfam" id="TIGR00838">
    <property type="entry name" value="argH"/>
    <property type="match status" value="1"/>
</dbReference>
<dbReference type="PANTHER" id="PTHR43814">
    <property type="entry name" value="ARGININOSUCCINATE LYASE"/>
    <property type="match status" value="1"/>
</dbReference>
<dbReference type="PANTHER" id="PTHR43814:SF1">
    <property type="entry name" value="ARGININOSUCCINATE LYASE"/>
    <property type="match status" value="1"/>
</dbReference>
<dbReference type="Pfam" id="PF14698">
    <property type="entry name" value="ASL_C2"/>
    <property type="match status" value="1"/>
</dbReference>
<dbReference type="Pfam" id="PF00206">
    <property type="entry name" value="Lyase_1"/>
    <property type="match status" value="1"/>
</dbReference>
<dbReference type="PRINTS" id="PR00145">
    <property type="entry name" value="ARGSUCLYASE"/>
</dbReference>
<dbReference type="PRINTS" id="PR00149">
    <property type="entry name" value="FUMRATELYASE"/>
</dbReference>
<dbReference type="SUPFAM" id="SSF48557">
    <property type="entry name" value="L-aspartase-like"/>
    <property type="match status" value="1"/>
</dbReference>
<dbReference type="PROSITE" id="PS00163">
    <property type="entry name" value="FUMARATE_LYASES"/>
    <property type="match status" value="1"/>
</dbReference>
<name>ARLY_NITSB</name>